<sequence>MKDIATPNRTKDIVEKYGFSFKKSLGQNFLIDTNVLNRIVDHAEIGSESGAIEIGPGIGALTEQLAKRAKKVVAFEIDQRLLPILDETLAPYGNVTVINKDVLKADVHEVFNEQFEEGQDVMVVANLPYYITTPILFKLLEEKLPVRGFVVMMQKEVGDRLAAKPGTKEYGSLSIAIQYYTEVETVMTVPRTVFVPQPNVDSAIIRLLKRPKPVVEVTDETFFFEVVRASFAQRRKTLMNNLSNNLNGFPKDKELLDRILTEVGIDPKRRGETLSIEEFATLSNALVLHKLS</sequence>
<feature type="chain" id="PRO_1000130243" description="Ribosomal RNA small subunit methyltransferase A">
    <location>
        <begin position="1"/>
        <end position="292"/>
    </location>
</feature>
<feature type="binding site" evidence="1">
    <location>
        <position position="28"/>
    </location>
    <ligand>
        <name>S-adenosyl-L-methionine</name>
        <dbReference type="ChEBI" id="CHEBI:59789"/>
    </ligand>
</feature>
<feature type="binding site" evidence="1">
    <location>
        <position position="30"/>
    </location>
    <ligand>
        <name>S-adenosyl-L-methionine</name>
        <dbReference type="ChEBI" id="CHEBI:59789"/>
    </ligand>
</feature>
<feature type="binding site" evidence="1">
    <location>
        <position position="55"/>
    </location>
    <ligand>
        <name>S-adenosyl-L-methionine</name>
        <dbReference type="ChEBI" id="CHEBI:59789"/>
    </ligand>
</feature>
<feature type="binding site" evidence="1">
    <location>
        <position position="76"/>
    </location>
    <ligand>
        <name>S-adenosyl-L-methionine</name>
        <dbReference type="ChEBI" id="CHEBI:59789"/>
    </ligand>
</feature>
<feature type="binding site" evidence="1">
    <location>
        <position position="101"/>
    </location>
    <ligand>
        <name>S-adenosyl-L-methionine</name>
        <dbReference type="ChEBI" id="CHEBI:59789"/>
    </ligand>
</feature>
<feature type="binding site" evidence="1">
    <location>
        <position position="126"/>
    </location>
    <ligand>
        <name>S-adenosyl-L-methionine</name>
        <dbReference type="ChEBI" id="CHEBI:59789"/>
    </ligand>
</feature>
<gene>
    <name evidence="1" type="primary">rsmA</name>
    <name evidence="1" type="synonym">ksgA</name>
    <name type="ordered locus">BCB4264_A0046</name>
</gene>
<accession>B7HIK9</accession>
<proteinExistence type="inferred from homology"/>
<reference key="1">
    <citation type="submission" date="2008-10" db="EMBL/GenBank/DDBJ databases">
        <title>Genome sequence of Bacillus cereus B4264.</title>
        <authorList>
            <person name="Dodson R.J."/>
            <person name="Durkin A.S."/>
            <person name="Rosovitz M.J."/>
            <person name="Rasko D.A."/>
            <person name="Hoffmaster A."/>
            <person name="Ravel J."/>
            <person name="Sutton G."/>
        </authorList>
    </citation>
    <scope>NUCLEOTIDE SEQUENCE [LARGE SCALE GENOMIC DNA]</scope>
    <source>
        <strain>B4264</strain>
    </source>
</reference>
<organism>
    <name type="scientific">Bacillus cereus (strain B4264)</name>
    <dbReference type="NCBI Taxonomy" id="405532"/>
    <lineage>
        <taxon>Bacteria</taxon>
        <taxon>Bacillati</taxon>
        <taxon>Bacillota</taxon>
        <taxon>Bacilli</taxon>
        <taxon>Bacillales</taxon>
        <taxon>Bacillaceae</taxon>
        <taxon>Bacillus</taxon>
        <taxon>Bacillus cereus group</taxon>
    </lineage>
</organism>
<evidence type="ECO:0000255" key="1">
    <source>
        <dbReference type="HAMAP-Rule" id="MF_00607"/>
    </source>
</evidence>
<dbReference type="EC" id="2.1.1.182" evidence="1"/>
<dbReference type="EMBL" id="CP001176">
    <property type="protein sequence ID" value="ACK60504.1"/>
    <property type="molecule type" value="Genomic_DNA"/>
</dbReference>
<dbReference type="RefSeq" id="WP_000651548.1">
    <property type="nucleotide sequence ID" value="NZ_VEHB01000020.1"/>
</dbReference>
<dbReference type="SMR" id="B7HIK9"/>
<dbReference type="GeneID" id="72446842"/>
<dbReference type="KEGG" id="bcb:BCB4264_A0046"/>
<dbReference type="HOGENOM" id="CLU_041220_0_0_9"/>
<dbReference type="Proteomes" id="UP000007096">
    <property type="component" value="Chromosome"/>
</dbReference>
<dbReference type="GO" id="GO:0005829">
    <property type="term" value="C:cytosol"/>
    <property type="evidence" value="ECO:0007669"/>
    <property type="project" value="TreeGrafter"/>
</dbReference>
<dbReference type="GO" id="GO:0052908">
    <property type="term" value="F:16S rRNA (adenine(1518)-N(6)/adenine(1519)-N(6))-dimethyltransferase activity"/>
    <property type="evidence" value="ECO:0007669"/>
    <property type="project" value="UniProtKB-EC"/>
</dbReference>
<dbReference type="GO" id="GO:0003723">
    <property type="term" value="F:RNA binding"/>
    <property type="evidence" value="ECO:0007669"/>
    <property type="project" value="UniProtKB-KW"/>
</dbReference>
<dbReference type="CDD" id="cd02440">
    <property type="entry name" value="AdoMet_MTases"/>
    <property type="match status" value="1"/>
</dbReference>
<dbReference type="FunFam" id="1.10.8.100:FF:000002">
    <property type="entry name" value="Ribosomal RNA small subunit methyltransferase A"/>
    <property type="match status" value="1"/>
</dbReference>
<dbReference type="FunFam" id="3.40.50.150:FF:000023">
    <property type="entry name" value="Ribosomal RNA small subunit methyltransferase A"/>
    <property type="match status" value="1"/>
</dbReference>
<dbReference type="Gene3D" id="1.10.8.100">
    <property type="entry name" value="Ribosomal RNA adenine dimethylase-like, domain 2"/>
    <property type="match status" value="1"/>
</dbReference>
<dbReference type="Gene3D" id="3.40.50.150">
    <property type="entry name" value="Vaccinia Virus protein VP39"/>
    <property type="match status" value="1"/>
</dbReference>
<dbReference type="HAMAP" id="MF_00607">
    <property type="entry name" value="16SrRNA_methyltr_A"/>
    <property type="match status" value="1"/>
</dbReference>
<dbReference type="InterPro" id="IPR001737">
    <property type="entry name" value="KsgA/Erm"/>
</dbReference>
<dbReference type="InterPro" id="IPR023165">
    <property type="entry name" value="rRNA_Ade_diMease-like_C"/>
</dbReference>
<dbReference type="InterPro" id="IPR020596">
    <property type="entry name" value="rRNA_Ade_Mease_Trfase_CS"/>
</dbReference>
<dbReference type="InterPro" id="IPR020598">
    <property type="entry name" value="rRNA_Ade_methylase_Trfase_N"/>
</dbReference>
<dbReference type="InterPro" id="IPR011530">
    <property type="entry name" value="rRNA_adenine_dimethylase"/>
</dbReference>
<dbReference type="InterPro" id="IPR029063">
    <property type="entry name" value="SAM-dependent_MTases_sf"/>
</dbReference>
<dbReference type="NCBIfam" id="TIGR00755">
    <property type="entry name" value="ksgA"/>
    <property type="match status" value="1"/>
</dbReference>
<dbReference type="PANTHER" id="PTHR11727">
    <property type="entry name" value="DIMETHYLADENOSINE TRANSFERASE"/>
    <property type="match status" value="1"/>
</dbReference>
<dbReference type="PANTHER" id="PTHR11727:SF7">
    <property type="entry name" value="DIMETHYLADENOSINE TRANSFERASE-RELATED"/>
    <property type="match status" value="1"/>
</dbReference>
<dbReference type="Pfam" id="PF00398">
    <property type="entry name" value="RrnaAD"/>
    <property type="match status" value="1"/>
</dbReference>
<dbReference type="SMART" id="SM00650">
    <property type="entry name" value="rADc"/>
    <property type="match status" value="1"/>
</dbReference>
<dbReference type="SUPFAM" id="SSF53335">
    <property type="entry name" value="S-adenosyl-L-methionine-dependent methyltransferases"/>
    <property type="match status" value="1"/>
</dbReference>
<dbReference type="PROSITE" id="PS01131">
    <property type="entry name" value="RRNA_A_DIMETH"/>
    <property type="match status" value="1"/>
</dbReference>
<dbReference type="PROSITE" id="PS51689">
    <property type="entry name" value="SAM_RNA_A_N6_MT"/>
    <property type="match status" value="1"/>
</dbReference>
<name>RSMA_BACC4</name>
<protein>
    <recommendedName>
        <fullName evidence="1">Ribosomal RNA small subunit methyltransferase A</fullName>
        <ecNumber evidence="1">2.1.1.182</ecNumber>
    </recommendedName>
    <alternativeName>
        <fullName evidence="1">16S rRNA (adenine(1518)-N(6)/adenine(1519)-N(6))-dimethyltransferase</fullName>
    </alternativeName>
    <alternativeName>
        <fullName evidence="1">16S rRNA dimethyladenosine transferase</fullName>
    </alternativeName>
    <alternativeName>
        <fullName evidence="1">16S rRNA dimethylase</fullName>
    </alternativeName>
    <alternativeName>
        <fullName evidence="1">S-adenosylmethionine-6-N', N'-adenosyl(rRNA) dimethyltransferase</fullName>
    </alternativeName>
</protein>
<keyword id="KW-0963">Cytoplasm</keyword>
<keyword id="KW-0489">Methyltransferase</keyword>
<keyword id="KW-0694">RNA-binding</keyword>
<keyword id="KW-0698">rRNA processing</keyword>
<keyword id="KW-0949">S-adenosyl-L-methionine</keyword>
<keyword id="KW-0808">Transferase</keyword>
<comment type="function">
    <text evidence="1">Specifically dimethylates two adjacent adenosines (A1518 and A1519) in the loop of a conserved hairpin near the 3'-end of 16S rRNA in the 30S particle. May play a critical role in biogenesis of 30S subunits.</text>
</comment>
<comment type="catalytic activity">
    <reaction evidence="1">
        <text>adenosine(1518)/adenosine(1519) in 16S rRNA + 4 S-adenosyl-L-methionine = N(6)-dimethyladenosine(1518)/N(6)-dimethyladenosine(1519) in 16S rRNA + 4 S-adenosyl-L-homocysteine + 4 H(+)</text>
        <dbReference type="Rhea" id="RHEA:19609"/>
        <dbReference type="Rhea" id="RHEA-COMP:10232"/>
        <dbReference type="Rhea" id="RHEA-COMP:10233"/>
        <dbReference type="ChEBI" id="CHEBI:15378"/>
        <dbReference type="ChEBI" id="CHEBI:57856"/>
        <dbReference type="ChEBI" id="CHEBI:59789"/>
        <dbReference type="ChEBI" id="CHEBI:74411"/>
        <dbReference type="ChEBI" id="CHEBI:74493"/>
        <dbReference type="EC" id="2.1.1.182"/>
    </reaction>
</comment>
<comment type="subcellular location">
    <subcellularLocation>
        <location evidence="1">Cytoplasm</location>
    </subcellularLocation>
</comment>
<comment type="similarity">
    <text evidence="1">Belongs to the class I-like SAM-binding methyltransferase superfamily. rRNA adenine N(6)-methyltransferase family. RsmA subfamily.</text>
</comment>